<gene>
    <name evidence="1" type="primary">flgI</name>
    <name type="ordered locus">LIC_11327</name>
</gene>
<reference key="1">
    <citation type="journal article" date="2004" name="J. Bacteriol.">
        <title>Comparative genomics of two Leptospira interrogans serovars reveals novel insights into physiology and pathogenesis.</title>
        <authorList>
            <person name="Nascimento A.L.T.O."/>
            <person name="Ko A.I."/>
            <person name="Martins E.A.L."/>
            <person name="Monteiro-Vitorello C.B."/>
            <person name="Ho P.L."/>
            <person name="Haake D.A."/>
            <person name="Verjovski-Almeida S."/>
            <person name="Hartskeerl R.A."/>
            <person name="Marques M.V."/>
            <person name="Oliveira M.C."/>
            <person name="Menck C.F.M."/>
            <person name="Leite L.C.C."/>
            <person name="Carrer H."/>
            <person name="Coutinho L.L."/>
            <person name="Degrave W.M."/>
            <person name="Dellagostin O.A."/>
            <person name="El-Dorry H."/>
            <person name="Ferro E.S."/>
            <person name="Ferro M.I.T."/>
            <person name="Furlan L.R."/>
            <person name="Gamberini M."/>
            <person name="Giglioti E.A."/>
            <person name="Goes-Neto A."/>
            <person name="Goldman G.H."/>
            <person name="Goldman M.H.S."/>
            <person name="Harakava R."/>
            <person name="Jeronimo S.M.B."/>
            <person name="Junqueira-de-Azevedo I.L.M."/>
            <person name="Kimura E.T."/>
            <person name="Kuramae E.E."/>
            <person name="Lemos E.G.M."/>
            <person name="Lemos M.V.F."/>
            <person name="Marino C.L."/>
            <person name="Nunes L.R."/>
            <person name="de Oliveira R.C."/>
            <person name="Pereira G.G."/>
            <person name="Reis M.S."/>
            <person name="Schriefer A."/>
            <person name="Siqueira W.J."/>
            <person name="Sommer P."/>
            <person name="Tsai S.M."/>
            <person name="Simpson A.J.G."/>
            <person name="Ferro J.A."/>
            <person name="Camargo L.E.A."/>
            <person name="Kitajima J.P."/>
            <person name="Setubal J.C."/>
            <person name="Van Sluys M.A."/>
        </authorList>
    </citation>
    <scope>NUCLEOTIDE SEQUENCE [LARGE SCALE GENOMIC DNA]</scope>
    <source>
        <strain>Fiocruz L1-130</strain>
    </source>
</reference>
<sequence>MKSKYSIFCMFLLRGFIFLGTVFSLNSAELRLKDIARIEGVRENQITGYGIVVGLPGTGDSKTPFTSESMKNYLKNLGVEANLKPDQTRNIASVLITATIPTYSRKGDKLNVVVSSIGDAKSLEGGVLLQSPLKTAGDKTYAVASGVISFGGRQEQERGSSSRGNKKTVGVVHGGAIVEQELDQNFYASERVQIQLENQDFTTLNAIVSKIRSILPGKHGIGPESVVPISPSEINIVLGKSFENKSDAFLTLLSDIENLTVETQTKPKVVINERTGVIVMGGNITIEEVAVSRSGLNLSVTDKNRRRNWLGKEQEPTKSSFLIEESTSVGDVVEALNKVGASTKDIIAILEALKKSGALHAELEIQ</sequence>
<organism>
    <name type="scientific">Leptospira interrogans serogroup Icterohaemorrhagiae serovar copenhageni (strain Fiocruz L1-130)</name>
    <dbReference type="NCBI Taxonomy" id="267671"/>
    <lineage>
        <taxon>Bacteria</taxon>
        <taxon>Pseudomonadati</taxon>
        <taxon>Spirochaetota</taxon>
        <taxon>Spirochaetia</taxon>
        <taxon>Leptospirales</taxon>
        <taxon>Leptospiraceae</taxon>
        <taxon>Leptospira</taxon>
    </lineage>
</organism>
<feature type="signal peptide" evidence="1">
    <location>
        <begin position="1"/>
        <end position="27"/>
    </location>
</feature>
<feature type="chain" id="PRO_0000009509" description="Flagellar P-ring protein">
    <location>
        <begin position="28"/>
        <end position="366"/>
    </location>
</feature>
<keyword id="KW-0975">Bacterial flagellum</keyword>
<keyword id="KW-0574">Periplasm</keyword>
<keyword id="KW-0732">Signal</keyword>
<evidence type="ECO:0000255" key="1">
    <source>
        <dbReference type="HAMAP-Rule" id="MF_00416"/>
    </source>
</evidence>
<accession>Q72SP8</accession>
<proteinExistence type="inferred from homology"/>
<name>FLGI_LEPIC</name>
<comment type="function">
    <text evidence="1">Assembles around the rod to form the L-ring and probably protects the motor/basal body from shearing forces during rotation.</text>
</comment>
<comment type="subunit">
    <text evidence="1">The basal body constitutes a major portion of the flagellar organelle and consists of four rings (L,P,S, and M) mounted on a central rod.</text>
</comment>
<comment type="subcellular location">
    <subcellularLocation>
        <location evidence="1">Periplasm</location>
    </subcellularLocation>
    <subcellularLocation>
        <location evidence="1">Bacterial flagellum basal body</location>
    </subcellularLocation>
</comment>
<comment type="similarity">
    <text evidence="1">Belongs to the FlgI family.</text>
</comment>
<dbReference type="EMBL" id="AE016823">
    <property type="protein sequence ID" value="AAS69930.1"/>
    <property type="molecule type" value="Genomic_DNA"/>
</dbReference>
<dbReference type="RefSeq" id="WP_000838056.1">
    <property type="nucleotide sequence ID" value="NC_005823.1"/>
</dbReference>
<dbReference type="SMR" id="Q72SP8"/>
<dbReference type="KEGG" id="lic:LIC_11327"/>
<dbReference type="HOGENOM" id="CLU_045235_1_0_12"/>
<dbReference type="Proteomes" id="UP000007037">
    <property type="component" value="Chromosome I"/>
</dbReference>
<dbReference type="GO" id="GO:0009428">
    <property type="term" value="C:bacterial-type flagellum basal body, distal rod, P ring"/>
    <property type="evidence" value="ECO:0007669"/>
    <property type="project" value="InterPro"/>
</dbReference>
<dbReference type="GO" id="GO:0030288">
    <property type="term" value="C:outer membrane-bounded periplasmic space"/>
    <property type="evidence" value="ECO:0007669"/>
    <property type="project" value="InterPro"/>
</dbReference>
<dbReference type="GO" id="GO:0005198">
    <property type="term" value="F:structural molecule activity"/>
    <property type="evidence" value="ECO:0007669"/>
    <property type="project" value="InterPro"/>
</dbReference>
<dbReference type="GO" id="GO:0071973">
    <property type="term" value="P:bacterial-type flagellum-dependent cell motility"/>
    <property type="evidence" value="ECO:0007669"/>
    <property type="project" value="InterPro"/>
</dbReference>
<dbReference type="HAMAP" id="MF_00416">
    <property type="entry name" value="FlgI"/>
    <property type="match status" value="1"/>
</dbReference>
<dbReference type="InterPro" id="IPR001782">
    <property type="entry name" value="Flag_FlgI"/>
</dbReference>
<dbReference type="NCBIfam" id="NF003676">
    <property type="entry name" value="PRK05303.1"/>
    <property type="match status" value="1"/>
</dbReference>
<dbReference type="PANTHER" id="PTHR30381">
    <property type="entry name" value="FLAGELLAR P-RING PERIPLASMIC PROTEIN FLGI"/>
    <property type="match status" value="1"/>
</dbReference>
<dbReference type="PANTHER" id="PTHR30381:SF0">
    <property type="entry name" value="FLAGELLAR P-RING PROTEIN"/>
    <property type="match status" value="1"/>
</dbReference>
<dbReference type="Pfam" id="PF02119">
    <property type="entry name" value="FlgI"/>
    <property type="match status" value="1"/>
</dbReference>
<dbReference type="PRINTS" id="PR01010">
    <property type="entry name" value="FLGPRINGFLGI"/>
</dbReference>
<protein>
    <recommendedName>
        <fullName evidence="1">Flagellar P-ring protein</fullName>
    </recommendedName>
    <alternativeName>
        <fullName evidence="1">Basal body P-ring protein</fullName>
    </alternativeName>
</protein>